<proteinExistence type="inferred from homology"/>
<name>DUT_CHRVO</name>
<reference key="1">
    <citation type="journal article" date="2003" name="Proc. Natl. Acad. Sci. U.S.A.">
        <title>The complete genome sequence of Chromobacterium violaceum reveals remarkable and exploitable bacterial adaptability.</title>
        <authorList>
            <person name="Vasconcelos A.T.R."/>
            <person name="de Almeida D.F."/>
            <person name="Hungria M."/>
            <person name="Guimaraes C.T."/>
            <person name="Antonio R.V."/>
            <person name="Almeida F.C."/>
            <person name="de Almeida L.G.P."/>
            <person name="de Almeida R."/>
            <person name="Alves-Gomes J.A."/>
            <person name="Andrade E.M."/>
            <person name="Araripe J."/>
            <person name="de Araujo M.F.F."/>
            <person name="Astolfi-Filho S."/>
            <person name="Azevedo V."/>
            <person name="Baptista A.J."/>
            <person name="Bataus L.A.M."/>
            <person name="Batista J.S."/>
            <person name="Belo A."/>
            <person name="van den Berg C."/>
            <person name="Bogo M."/>
            <person name="Bonatto S."/>
            <person name="Bordignon J."/>
            <person name="Brigido M.M."/>
            <person name="Brito C.A."/>
            <person name="Brocchi M."/>
            <person name="Burity H.A."/>
            <person name="Camargo A.A."/>
            <person name="Cardoso D.D.P."/>
            <person name="Carneiro N.P."/>
            <person name="Carraro D.M."/>
            <person name="Carvalho C.M.B."/>
            <person name="Cascardo J.C.M."/>
            <person name="Cavada B.S."/>
            <person name="Chueire L.M.O."/>
            <person name="Creczynski-Pasa T.B."/>
            <person name="Cunha-Junior N.C."/>
            <person name="Fagundes N."/>
            <person name="Falcao C.L."/>
            <person name="Fantinatti F."/>
            <person name="Farias I.P."/>
            <person name="Felipe M.S.S."/>
            <person name="Ferrari L.P."/>
            <person name="Ferro J.A."/>
            <person name="Ferro M.I.T."/>
            <person name="Franco G.R."/>
            <person name="Freitas N.S.A."/>
            <person name="Furlan L.R."/>
            <person name="Gazzinelli R.T."/>
            <person name="Gomes E.A."/>
            <person name="Goncalves P.R."/>
            <person name="Grangeiro T.B."/>
            <person name="Grattapaglia D."/>
            <person name="Grisard E.C."/>
            <person name="Hanna E.S."/>
            <person name="Jardim S.N."/>
            <person name="Laurino J."/>
            <person name="Leoi L.C.T."/>
            <person name="Lima L.F.A."/>
            <person name="Loureiro M.F."/>
            <person name="Lyra M.C.C.P."/>
            <person name="Madeira H.M.F."/>
            <person name="Manfio G.P."/>
            <person name="Maranhao A.Q."/>
            <person name="Martins W.S."/>
            <person name="di Mauro S.M.Z."/>
            <person name="de Medeiros S.R.B."/>
            <person name="Meissner R.V."/>
            <person name="Moreira M.A.M."/>
            <person name="Nascimento F.F."/>
            <person name="Nicolas M.F."/>
            <person name="Oliveira J.G."/>
            <person name="Oliveira S.C."/>
            <person name="Paixao R.F.C."/>
            <person name="Parente J.A."/>
            <person name="Pedrosa F.O."/>
            <person name="Pena S.D.J."/>
            <person name="Pereira J.O."/>
            <person name="Pereira M."/>
            <person name="Pinto L.S.R.C."/>
            <person name="Pinto L.S."/>
            <person name="Porto J.I.R."/>
            <person name="Potrich D.P."/>
            <person name="Ramalho-Neto C.E."/>
            <person name="Reis A.M.M."/>
            <person name="Rigo L.U."/>
            <person name="Rondinelli E."/>
            <person name="Santos E.B.P."/>
            <person name="Santos F.R."/>
            <person name="Schneider M.P.C."/>
            <person name="Seuanez H.N."/>
            <person name="Silva A.M.R."/>
            <person name="da Silva A.L.C."/>
            <person name="Silva D.W."/>
            <person name="Silva R."/>
            <person name="Simoes I.C."/>
            <person name="Simon D."/>
            <person name="Soares C.M.A."/>
            <person name="Soares R.B.A."/>
            <person name="Souza E.M."/>
            <person name="Souza K.R.L."/>
            <person name="Souza R.C."/>
            <person name="Steffens M.B.R."/>
            <person name="Steindel M."/>
            <person name="Teixeira S.R."/>
            <person name="Urmenyi T."/>
            <person name="Vettore A."/>
            <person name="Wassem R."/>
            <person name="Zaha A."/>
            <person name="Simpson A.J.G."/>
        </authorList>
    </citation>
    <scope>NUCLEOTIDE SEQUENCE [LARGE SCALE GENOMIC DNA]</scope>
    <source>
        <strain>ATCC 12472 / DSM 30191 / JCM 1249 / CCUG 213 / NBRC 12614 / NCIMB 9131 / NCTC 9757 / MK</strain>
    </source>
</reference>
<organism>
    <name type="scientific">Chromobacterium violaceum (strain ATCC 12472 / DSM 30191 / JCM 1249 / CCUG 213 / NBRC 12614 / NCIMB 9131 / NCTC 9757 / MK)</name>
    <dbReference type="NCBI Taxonomy" id="243365"/>
    <lineage>
        <taxon>Bacteria</taxon>
        <taxon>Pseudomonadati</taxon>
        <taxon>Pseudomonadota</taxon>
        <taxon>Betaproteobacteria</taxon>
        <taxon>Neisseriales</taxon>
        <taxon>Chromobacteriaceae</taxon>
        <taxon>Chromobacterium</taxon>
    </lineage>
</organism>
<gene>
    <name evidence="1" type="primary">dut</name>
    <name type="ordered locus">CV_3081</name>
</gene>
<feature type="chain" id="PRO_0000182849" description="Deoxyuridine 5'-triphosphate nucleotidohydrolase">
    <location>
        <begin position="1"/>
        <end position="150"/>
    </location>
</feature>
<feature type="binding site" evidence="1">
    <location>
        <begin position="69"/>
        <end position="71"/>
    </location>
    <ligand>
        <name>substrate</name>
    </ligand>
</feature>
<feature type="binding site" evidence="1">
    <location>
        <position position="82"/>
    </location>
    <ligand>
        <name>substrate</name>
    </ligand>
</feature>
<feature type="binding site" evidence="1">
    <location>
        <begin position="86"/>
        <end position="88"/>
    </location>
    <ligand>
        <name>substrate</name>
    </ligand>
</feature>
<sequence>MQAVIDVKILDARLRDNLPAYATAGSAGLDLRAATEETMTIQPGETQLVPTGIAIHLSDPGLAAMLLPRSGLGHKHGIVLGNLVGLIDSDYQGQMFVSVWNRGQQPFRLEPMERIAQMVIVPVVQASFNIVDDFDASDRGAGGFGSTGRG</sequence>
<dbReference type="EC" id="3.6.1.23" evidence="1"/>
<dbReference type="EMBL" id="AE016825">
    <property type="protein sequence ID" value="AAQ60750.1"/>
    <property type="molecule type" value="Genomic_DNA"/>
</dbReference>
<dbReference type="RefSeq" id="WP_011136628.1">
    <property type="nucleotide sequence ID" value="NC_005085.1"/>
</dbReference>
<dbReference type="SMR" id="Q7MBE8"/>
<dbReference type="STRING" id="243365.CV_3081"/>
<dbReference type="KEGG" id="cvi:CV_3081"/>
<dbReference type="eggNOG" id="COG0756">
    <property type="taxonomic scope" value="Bacteria"/>
</dbReference>
<dbReference type="HOGENOM" id="CLU_068508_1_1_4"/>
<dbReference type="OrthoDB" id="9809956at2"/>
<dbReference type="UniPathway" id="UPA00610">
    <property type="reaction ID" value="UER00666"/>
</dbReference>
<dbReference type="Proteomes" id="UP000001424">
    <property type="component" value="Chromosome"/>
</dbReference>
<dbReference type="GO" id="GO:0004170">
    <property type="term" value="F:dUTP diphosphatase activity"/>
    <property type="evidence" value="ECO:0007669"/>
    <property type="project" value="UniProtKB-UniRule"/>
</dbReference>
<dbReference type="GO" id="GO:0000287">
    <property type="term" value="F:magnesium ion binding"/>
    <property type="evidence" value="ECO:0007669"/>
    <property type="project" value="UniProtKB-UniRule"/>
</dbReference>
<dbReference type="GO" id="GO:0006226">
    <property type="term" value="P:dUMP biosynthetic process"/>
    <property type="evidence" value="ECO:0007669"/>
    <property type="project" value="UniProtKB-UniRule"/>
</dbReference>
<dbReference type="GO" id="GO:0046081">
    <property type="term" value="P:dUTP catabolic process"/>
    <property type="evidence" value="ECO:0007669"/>
    <property type="project" value="InterPro"/>
</dbReference>
<dbReference type="CDD" id="cd07557">
    <property type="entry name" value="trimeric_dUTPase"/>
    <property type="match status" value="1"/>
</dbReference>
<dbReference type="FunFam" id="2.70.40.10:FF:000002">
    <property type="entry name" value="dUTP diphosphatase"/>
    <property type="match status" value="1"/>
</dbReference>
<dbReference type="Gene3D" id="2.70.40.10">
    <property type="match status" value="1"/>
</dbReference>
<dbReference type="HAMAP" id="MF_00116">
    <property type="entry name" value="dUTPase_bact"/>
    <property type="match status" value="1"/>
</dbReference>
<dbReference type="InterPro" id="IPR008181">
    <property type="entry name" value="dUTPase"/>
</dbReference>
<dbReference type="InterPro" id="IPR029054">
    <property type="entry name" value="dUTPase-like"/>
</dbReference>
<dbReference type="InterPro" id="IPR036157">
    <property type="entry name" value="dUTPase-like_sf"/>
</dbReference>
<dbReference type="InterPro" id="IPR033704">
    <property type="entry name" value="dUTPase_trimeric"/>
</dbReference>
<dbReference type="NCBIfam" id="TIGR00576">
    <property type="entry name" value="dut"/>
    <property type="match status" value="1"/>
</dbReference>
<dbReference type="NCBIfam" id="NF001862">
    <property type="entry name" value="PRK00601.1"/>
    <property type="match status" value="1"/>
</dbReference>
<dbReference type="PANTHER" id="PTHR11241">
    <property type="entry name" value="DEOXYURIDINE 5'-TRIPHOSPHATE NUCLEOTIDOHYDROLASE"/>
    <property type="match status" value="1"/>
</dbReference>
<dbReference type="PANTHER" id="PTHR11241:SF0">
    <property type="entry name" value="DEOXYURIDINE 5'-TRIPHOSPHATE NUCLEOTIDOHYDROLASE"/>
    <property type="match status" value="1"/>
</dbReference>
<dbReference type="Pfam" id="PF00692">
    <property type="entry name" value="dUTPase"/>
    <property type="match status" value="1"/>
</dbReference>
<dbReference type="SUPFAM" id="SSF51283">
    <property type="entry name" value="dUTPase-like"/>
    <property type="match status" value="1"/>
</dbReference>
<accession>Q7MBE8</accession>
<protein>
    <recommendedName>
        <fullName evidence="1">Deoxyuridine 5'-triphosphate nucleotidohydrolase</fullName>
        <shortName evidence="1">dUTPase</shortName>
        <ecNumber evidence="1">3.6.1.23</ecNumber>
    </recommendedName>
    <alternativeName>
        <fullName evidence="1">dUTP pyrophosphatase</fullName>
    </alternativeName>
</protein>
<keyword id="KW-0378">Hydrolase</keyword>
<keyword id="KW-0460">Magnesium</keyword>
<keyword id="KW-0479">Metal-binding</keyword>
<keyword id="KW-0546">Nucleotide metabolism</keyword>
<keyword id="KW-1185">Reference proteome</keyword>
<evidence type="ECO:0000255" key="1">
    <source>
        <dbReference type="HAMAP-Rule" id="MF_00116"/>
    </source>
</evidence>
<comment type="function">
    <text evidence="1">This enzyme is involved in nucleotide metabolism: it produces dUMP, the immediate precursor of thymidine nucleotides and it decreases the intracellular concentration of dUTP so that uracil cannot be incorporated into DNA.</text>
</comment>
<comment type="catalytic activity">
    <reaction evidence="1">
        <text>dUTP + H2O = dUMP + diphosphate + H(+)</text>
        <dbReference type="Rhea" id="RHEA:10248"/>
        <dbReference type="ChEBI" id="CHEBI:15377"/>
        <dbReference type="ChEBI" id="CHEBI:15378"/>
        <dbReference type="ChEBI" id="CHEBI:33019"/>
        <dbReference type="ChEBI" id="CHEBI:61555"/>
        <dbReference type="ChEBI" id="CHEBI:246422"/>
        <dbReference type="EC" id="3.6.1.23"/>
    </reaction>
</comment>
<comment type="cofactor">
    <cofactor evidence="1">
        <name>Mg(2+)</name>
        <dbReference type="ChEBI" id="CHEBI:18420"/>
    </cofactor>
</comment>
<comment type="pathway">
    <text evidence="1">Pyrimidine metabolism; dUMP biosynthesis; dUMP from dCTP (dUTP route): step 2/2.</text>
</comment>
<comment type="similarity">
    <text evidence="1">Belongs to the dUTPase family.</text>
</comment>